<organism>
    <name type="scientific">Hordeum vulgare</name>
    <name type="common">Barley</name>
    <dbReference type="NCBI Taxonomy" id="4513"/>
    <lineage>
        <taxon>Eukaryota</taxon>
        <taxon>Viridiplantae</taxon>
        <taxon>Streptophyta</taxon>
        <taxon>Embryophyta</taxon>
        <taxon>Tracheophyta</taxon>
        <taxon>Spermatophyta</taxon>
        <taxon>Magnoliopsida</taxon>
        <taxon>Liliopsida</taxon>
        <taxon>Poales</taxon>
        <taxon>Poaceae</taxon>
        <taxon>BOP clade</taxon>
        <taxon>Pooideae</taxon>
        <taxon>Triticodae</taxon>
        <taxon>Triticeae</taxon>
        <taxon>Hordeinae</taxon>
        <taxon>Hordeum</taxon>
    </lineage>
</organism>
<keyword id="KW-0903">Direct protein sequencing</keyword>
<evidence type="ECO:0000269" key="1">
    <source>
    </source>
</evidence>
<evidence type="ECO:0000303" key="2">
    <source>
    </source>
</evidence>
<evidence type="ECO:0000305" key="3"/>
<comment type="miscellaneous">
    <text evidence="1">On the 2D-gel the determined pI of this unknown protein is: 8.5-9.0, its MW is: 11.9 kDa.</text>
</comment>
<accession>P82938</accession>
<name>UEPC_HORVU</name>
<feature type="chain" id="PRO_0000278135" description="Unknown endosperm protein C">
    <location>
        <begin position="1"/>
        <end position="10" status="greater than"/>
    </location>
</feature>
<feature type="non-terminal residue" evidence="2">
    <location>
        <position position="10"/>
    </location>
</feature>
<sequence length="10" mass="1053">GGCDGDRQDM</sequence>
<protein>
    <recommendedName>
        <fullName>Unknown endosperm protein C</fullName>
    </recommendedName>
</protein>
<reference evidence="3" key="1">
    <citation type="journal article" date="2000" name="Electrophoresis">
        <title>Separation and characterization of basic barley seed proteins.</title>
        <authorList>
            <person name="Kristoffersen H.E."/>
            <person name="Flengsrud R."/>
        </authorList>
    </citation>
    <scope>PROTEIN SEQUENCE</scope>
    <source>
        <strain evidence="1">cv. Bomi</strain>
        <tissue evidence="1">Starchy endosperm</tissue>
    </source>
</reference>
<proteinExistence type="evidence at protein level"/>